<reference key="1">
    <citation type="submission" date="2008-02" db="EMBL/GenBank/DDBJ databases">
        <title>Complete sequence of Synechococcus sp. PCC 7002.</title>
        <authorList>
            <person name="Li T."/>
            <person name="Zhao J."/>
            <person name="Zhao C."/>
            <person name="Liu Z."/>
            <person name="Zhao F."/>
            <person name="Marquardt J."/>
            <person name="Nomura C.T."/>
            <person name="Persson S."/>
            <person name="Detter J.C."/>
            <person name="Richardson P.M."/>
            <person name="Lanz C."/>
            <person name="Schuster S.C."/>
            <person name="Wang J."/>
            <person name="Li S."/>
            <person name="Huang X."/>
            <person name="Cai T."/>
            <person name="Yu Z."/>
            <person name="Luo J."/>
            <person name="Zhao J."/>
            <person name="Bryant D.A."/>
        </authorList>
    </citation>
    <scope>NUCLEOTIDE SEQUENCE [LARGE SCALE GENOMIC DNA]</scope>
    <source>
        <strain>ATCC 27264 / PCC 7002 / PR-6</strain>
    </source>
</reference>
<dbReference type="EC" id="3.1.3.5" evidence="1"/>
<dbReference type="EMBL" id="CP000951">
    <property type="protein sequence ID" value="ACA98499.1"/>
    <property type="molecule type" value="Genomic_DNA"/>
</dbReference>
<dbReference type="RefSeq" id="WP_012306123.1">
    <property type="nucleotide sequence ID" value="NZ_JAHHPU010000001.1"/>
</dbReference>
<dbReference type="SMR" id="B1XPE2"/>
<dbReference type="STRING" id="32049.SYNPCC7002_A0492"/>
<dbReference type="KEGG" id="syp:SYNPCC7002_A0492"/>
<dbReference type="eggNOG" id="COG0496">
    <property type="taxonomic scope" value="Bacteria"/>
</dbReference>
<dbReference type="HOGENOM" id="CLU_045192_1_3_3"/>
<dbReference type="Proteomes" id="UP000001688">
    <property type="component" value="Chromosome"/>
</dbReference>
<dbReference type="GO" id="GO:0005737">
    <property type="term" value="C:cytoplasm"/>
    <property type="evidence" value="ECO:0007669"/>
    <property type="project" value="UniProtKB-SubCell"/>
</dbReference>
<dbReference type="GO" id="GO:0008254">
    <property type="term" value="F:3'-nucleotidase activity"/>
    <property type="evidence" value="ECO:0007669"/>
    <property type="project" value="TreeGrafter"/>
</dbReference>
<dbReference type="GO" id="GO:0008253">
    <property type="term" value="F:5'-nucleotidase activity"/>
    <property type="evidence" value="ECO:0007669"/>
    <property type="project" value="UniProtKB-UniRule"/>
</dbReference>
<dbReference type="GO" id="GO:0004309">
    <property type="term" value="F:exopolyphosphatase activity"/>
    <property type="evidence" value="ECO:0007669"/>
    <property type="project" value="TreeGrafter"/>
</dbReference>
<dbReference type="GO" id="GO:0046872">
    <property type="term" value="F:metal ion binding"/>
    <property type="evidence" value="ECO:0007669"/>
    <property type="project" value="UniProtKB-UniRule"/>
</dbReference>
<dbReference type="GO" id="GO:0000166">
    <property type="term" value="F:nucleotide binding"/>
    <property type="evidence" value="ECO:0007669"/>
    <property type="project" value="UniProtKB-KW"/>
</dbReference>
<dbReference type="FunFam" id="3.40.1210.10:FF:000001">
    <property type="entry name" value="5'/3'-nucleotidase SurE"/>
    <property type="match status" value="1"/>
</dbReference>
<dbReference type="Gene3D" id="3.40.1210.10">
    <property type="entry name" value="Survival protein SurE-like phosphatase/nucleotidase"/>
    <property type="match status" value="1"/>
</dbReference>
<dbReference type="HAMAP" id="MF_00060">
    <property type="entry name" value="SurE"/>
    <property type="match status" value="1"/>
</dbReference>
<dbReference type="InterPro" id="IPR030048">
    <property type="entry name" value="SurE"/>
</dbReference>
<dbReference type="InterPro" id="IPR002828">
    <property type="entry name" value="SurE-like_Pase/nucleotidase"/>
</dbReference>
<dbReference type="InterPro" id="IPR036523">
    <property type="entry name" value="SurE-like_sf"/>
</dbReference>
<dbReference type="NCBIfam" id="NF001490">
    <property type="entry name" value="PRK00346.1-4"/>
    <property type="match status" value="1"/>
</dbReference>
<dbReference type="NCBIfam" id="NF001492">
    <property type="entry name" value="PRK00346.2-2"/>
    <property type="match status" value="1"/>
</dbReference>
<dbReference type="NCBIfam" id="TIGR00087">
    <property type="entry name" value="surE"/>
    <property type="match status" value="1"/>
</dbReference>
<dbReference type="PANTHER" id="PTHR30457">
    <property type="entry name" value="5'-NUCLEOTIDASE SURE"/>
    <property type="match status" value="1"/>
</dbReference>
<dbReference type="PANTHER" id="PTHR30457:SF12">
    <property type="entry name" value="5'_3'-NUCLEOTIDASE SURE"/>
    <property type="match status" value="1"/>
</dbReference>
<dbReference type="Pfam" id="PF01975">
    <property type="entry name" value="SurE"/>
    <property type="match status" value="1"/>
</dbReference>
<dbReference type="SUPFAM" id="SSF64167">
    <property type="entry name" value="SurE-like"/>
    <property type="match status" value="1"/>
</dbReference>
<protein>
    <recommendedName>
        <fullName evidence="1">5'-nucleotidase SurE</fullName>
        <ecNumber evidence="1">3.1.3.5</ecNumber>
    </recommendedName>
    <alternativeName>
        <fullName evidence="1">Nucleoside 5'-monophosphate phosphohydrolase</fullName>
    </alternativeName>
</protein>
<proteinExistence type="inferred from homology"/>
<gene>
    <name evidence="1" type="primary">surE</name>
    <name type="ordered locus">SYNPCC7002_A0492</name>
</gene>
<keyword id="KW-0963">Cytoplasm</keyword>
<keyword id="KW-0378">Hydrolase</keyword>
<keyword id="KW-0479">Metal-binding</keyword>
<keyword id="KW-0547">Nucleotide-binding</keyword>
<keyword id="KW-1185">Reference proteome</keyword>
<evidence type="ECO:0000255" key="1">
    <source>
        <dbReference type="HAMAP-Rule" id="MF_00060"/>
    </source>
</evidence>
<accession>B1XPE2</accession>
<comment type="function">
    <text evidence="1">Nucleotidase that shows phosphatase activity on nucleoside 5'-monophosphates.</text>
</comment>
<comment type="catalytic activity">
    <reaction evidence="1">
        <text>a ribonucleoside 5'-phosphate + H2O = a ribonucleoside + phosphate</text>
        <dbReference type="Rhea" id="RHEA:12484"/>
        <dbReference type="ChEBI" id="CHEBI:15377"/>
        <dbReference type="ChEBI" id="CHEBI:18254"/>
        <dbReference type="ChEBI" id="CHEBI:43474"/>
        <dbReference type="ChEBI" id="CHEBI:58043"/>
        <dbReference type="EC" id="3.1.3.5"/>
    </reaction>
</comment>
<comment type="cofactor">
    <cofactor evidence="1">
        <name>a divalent metal cation</name>
        <dbReference type="ChEBI" id="CHEBI:60240"/>
    </cofactor>
    <text evidence="1">Binds 1 divalent metal cation per subunit.</text>
</comment>
<comment type="subcellular location">
    <subcellularLocation>
        <location evidence="1">Cytoplasm</location>
    </subcellularLocation>
</comment>
<comment type="similarity">
    <text evidence="1">Belongs to the SurE nucleotidase family.</text>
</comment>
<sequence length="277" mass="30559">MTPATPLNLLISNDDGISALGIRTLANTLAEAGHQVTVVCPDRERSATGHGLTLHRPIRTEIVEGIFDPRVTAWSCSGTPSDCVKFALSAVLKERPDFVLSGINHGSNLGTDVLYSGTVSAAMEGLLEGIHSIALSLADYTSHNFQPAADFAVKLLCQLMEKRPHWAIANQDAPVLLNINVPNLEKEKLAGVKITRQGLRRYIEQFQKRQDPRGKTYYWLSGEVIEELPQPDEPNIPLDFPTDVQAIAAGYITITPLQYIMNDLHRIQTLAQEDWQI</sequence>
<name>SURE_PICP2</name>
<feature type="chain" id="PRO_1000092042" description="5'-nucleotidase SurE">
    <location>
        <begin position="1"/>
        <end position="277"/>
    </location>
</feature>
<feature type="binding site" evidence="1">
    <location>
        <position position="14"/>
    </location>
    <ligand>
        <name>a divalent metal cation</name>
        <dbReference type="ChEBI" id="CHEBI:60240"/>
    </ligand>
</feature>
<feature type="binding site" evidence="1">
    <location>
        <position position="15"/>
    </location>
    <ligand>
        <name>a divalent metal cation</name>
        <dbReference type="ChEBI" id="CHEBI:60240"/>
    </ligand>
</feature>
<feature type="binding site" evidence="1">
    <location>
        <position position="46"/>
    </location>
    <ligand>
        <name>a divalent metal cation</name>
        <dbReference type="ChEBI" id="CHEBI:60240"/>
    </ligand>
</feature>
<feature type="binding site" evidence="1">
    <location>
        <position position="104"/>
    </location>
    <ligand>
        <name>a divalent metal cation</name>
        <dbReference type="ChEBI" id="CHEBI:60240"/>
    </ligand>
</feature>
<organism>
    <name type="scientific">Picosynechococcus sp. (strain ATCC 27264 / PCC 7002 / PR-6)</name>
    <name type="common">Agmenellum quadruplicatum</name>
    <dbReference type="NCBI Taxonomy" id="32049"/>
    <lineage>
        <taxon>Bacteria</taxon>
        <taxon>Bacillati</taxon>
        <taxon>Cyanobacteriota</taxon>
        <taxon>Cyanophyceae</taxon>
        <taxon>Oscillatoriophycideae</taxon>
        <taxon>Chroococcales</taxon>
        <taxon>Geminocystaceae</taxon>
        <taxon>Picosynechococcus</taxon>
    </lineage>
</organism>